<evidence type="ECO:0000255" key="1">
    <source>
        <dbReference type="HAMAP-Rule" id="MF_00067"/>
    </source>
</evidence>
<accession>C4K7X8</accession>
<gene>
    <name evidence="1" type="primary">gmhA</name>
    <name type="ordered locus">HDEF_2106</name>
</gene>
<sequence length="206" mass="22826">MCIDLIRFELQQAAQILNQFMSDDKNLDPVRQAAFLLVDAFKAGKKVISCGNGGSHCDAMHFAEELTGRYRENRPGYPAIAISDVSHISCVGNDFGYEHVFSRYVDSVGCEGDVLFALSTSGNSKNIIKAIQSARQKKMKVIILTGQMGGAMSNLADVKICVPHQGYADRIQEIHIKIIHILILLIEQKMDINNESLTFLKEEGHV</sequence>
<reference key="1">
    <citation type="journal article" date="2009" name="Proc. Natl. Acad. Sci. U.S.A.">
        <title>Hamiltonella defensa, genome evolution of protective bacterial endosymbiont from pathogenic ancestors.</title>
        <authorList>
            <person name="Degnan P.H."/>
            <person name="Yu Y."/>
            <person name="Sisneros N."/>
            <person name="Wing R.A."/>
            <person name="Moran N.A."/>
        </authorList>
    </citation>
    <scope>NUCLEOTIDE SEQUENCE [LARGE SCALE GENOMIC DNA]</scope>
    <source>
        <strain>5AT</strain>
    </source>
</reference>
<keyword id="KW-0119">Carbohydrate metabolism</keyword>
<keyword id="KW-0963">Cytoplasm</keyword>
<keyword id="KW-0413">Isomerase</keyword>
<keyword id="KW-0479">Metal-binding</keyword>
<keyword id="KW-0862">Zinc</keyword>
<proteinExistence type="inferred from homology"/>
<protein>
    <recommendedName>
        <fullName evidence="1">Phosphoheptose isomerase</fullName>
        <ecNumber evidence="1">5.3.1.28</ecNumber>
    </recommendedName>
    <alternativeName>
        <fullName evidence="1">Sedoheptulose 7-phosphate isomerase</fullName>
    </alternativeName>
</protein>
<dbReference type="EC" id="5.3.1.28" evidence="1"/>
<dbReference type="EMBL" id="CP001277">
    <property type="protein sequence ID" value="ACQ68671.1"/>
    <property type="molecule type" value="Genomic_DNA"/>
</dbReference>
<dbReference type="RefSeq" id="WP_015874416.1">
    <property type="nucleotide sequence ID" value="NC_012751.1"/>
</dbReference>
<dbReference type="SMR" id="C4K7X8"/>
<dbReference type="STRING" id="572265.HDEF_2106"/>
<dbReference type="GeneID" id="66261644"/>
<dbReference type="KEGG" id="hde:HDEF_2106"/>
<dbReference type="eggNOG" id="COG0279">
    <property type="taxonomic scope" value="Bacteria"/>
</dbReference>
<dbReference type="HOGENOM" id="CLU_080999_4_0_6"/>
<dbReference type="UniPathway" id="UPA00041">
    <property type="reaction ID" value="UER00436"/>
</dbReference>
<dbReference type="Proteomes" id="UP000002334">
    <property type="component" value="Chromosome"/>
</dbReference>
<dbReference type="GO" id="GO:0005737">
    <property type="term" value="C:cytoplasm"/>
    <property type="evidence" value="ECO:0007669"/>
    <property type="project" value="UniProtKB-SubCell"/>
</dbReference>
<dbReference type="GO" id="GO:0097367">
    <property type="term" value="F:carbohydrate derivative binding"/>
    <property type="evidence" value="ECO:0007669"/>
    <property type="project" value="InterPro"/>
</dbReference>
<dbReference type="GO" id="GO:0008968">
    <property type="term" value="F:D-sedoheptulose 7-phosphate isomerase activity"/>
    <property type="evidence" value="ECO:0007669"/>
    <property type="project" value="UniProtKB-UniRule"/>
</dbReference>
<dbReference type="GO" id="GO:0008270">
    <property type="term" value="F:zinc ion binding"/>
    <property type="evidence" value="ECO:0007669"/>
    <property type="project" value="UniProtKB-UniRule"/>
</dbReference>
<dbReference type="GO" id="GO:0005975">
    <property type="term" value="P:carbohydrate metabolic process"/>
    <property type="evidence" value="ECO:0007669"/>
    <property type="project" value="UniProtKB-UniRule"/>
</dbReference>
<dbReference type="GO" id="GO:2001061">
    <property type="term" value="P:D-glycero-D-manno-heptose 7-phosphate biosynthetic process"/>
    <property type="evidence" value="ECO:0007669"/>
    <property type="project" value="UniProtKB-UniPathway"/>
</dbReference>
<dbReference type="CDD" id="cd05006">
    <property type="entry name" value="SIS_GmhA"/>
    <property type="match status" value="1"/>
</dbReference>
<dbReference type="Gene3D" id="3.40.50.10490">
    <property type="entry name" value="Glucose-6-phosphate isomerase like protein, domain 1"/>
    <property type="match status" value="1"/>
</dbReference>
<dbReference type="HAMAP" id="MF_00067">
    <property type="entry name" value="GmhA"/>
    <property type="match status" value="1"/>
</dbReference>
<dbReference type="InterPro" id="IPR035461">
    <property type="entry name" value="GmhA/DiaA"/>
</dbReference>
<dbReference type="InterPro" id="IPR004515">
    <property type="entry name" value="Phosphoheptose_Isoase"/>
</dbReference>
<dbReference type="InterPro" id="IPR001347">
    <property type="entry name" value="SIS_dom"/>
</dbReference>
<dbReference type="InterPro" id="IPR046348">
    <property type="entry name" value="SIS_dom_sf"/>
</dbReference>
<dbReference type="InterPro" id="IPR050099">
    <property type="entry name" value="SIS_GmhA/DiaA_subfam"/>
</dbReference>
<dbReference type="NCBIfam" id="TIGR00441">
    <property type="entry name" value="gmhA"/>
    <property type="match status" value="1"/>
</dbReference>
<dbReference type="NCBIfam" id="NF001628">
    <property type="entry name" value="PRK00414.1"/>
    <property type="match status" value="1"/>
</dbReference>
<dbReference type="PANTHER" id="PTHR30390:SF7">
    <property type="entry name" value="PHOSPHOHEPTOSE ISOMERASE"/>
    <property type="match status" value="1"/>
</dbReference>
<dbReference type="PANTHER" id="PTHR30390">
    <property type="entry name" value="SEDOHEPTULOSE 7-PHOSPHATE ISOMERASE / DNAA INITIATOR-ASSOCIATING FACTOR FOR REPLICATION INITIATION"/>
    <property type="match status" value="1"/>
</dbReference>
<dbReference type="Pfam" id="PF13580">
    <property type="entry name" value="SIS_2"/>
    <property type="match status" value="1"/>
</dbReference>
<dbReference type="SUPFAM" id="SSF53697">
    <property type="entry name" value="SIS domain"/>
    <property type="match status" value="1"/>
</dbReference>
<dbReference type="PROSITE" id="PS51464">
    <property type="entry name" value="SIS"/>
    <property type="match status" value="1"/>
</dbReference>
<feature type="chain" id="PRO_1000202421" description="Phosphoheptose isomerase">
    <location>
        <begin position="1"/>
        <end position="206"/>
    </location>
</feature>
<feature type="domain" description="SIS" evidence="1">
    <location>
        <begin position="37"/>
        <end position="195"/>
    </location>
</feature>
<feature type="binding site" evidence="1">
    <location>
        <begin position="52"/>
        <end position="54"/>
    </location>
    <ligand>
        <name>substrate</name>
    </ligand>
</feature>
<feature type="binding site" evidence="1">
    <location>
        <position position="61"/>
    </location>
    <ligand>
        <name>Zn(2+)</name>
        <dbReference type="ChEBI" id="CHEBI:29105"/>
    </ligand>
</feature>
<feature type="binding site" evidence="1">
    <location>
        <position position="65"/>
    </location>
    <ligand>
        <name>substrate</name>
    </ligand>
</feature>
<feature type="binding site" evidence="1">
    <location>
        <position position="65"/>
    </location>
    <ligand>
        <name>Zn(2+)</name>
        <dbReference type="ChEBI" id="CHEBI:29105"/>
    </ligand>
</feature>
<feature type="binding site" evidence="1">
    <location>
        <begin position="93"/>
        <end position="94"/>
    </location>
    <ligand>
        <name>substrate</name>
    </ligand>
</feature>
<feature type="binding site" evidence="1">
    <location>
        <begin position="119"/>
        <end position="121"/>
    </location>
    <ligand>
        <name>substrate</name>
    </ligand>
</feature>
<feature type="binding site" evidence="1">
    <location>
        <position position="124"/>
    </location>
    <ligand>
        <name>substrate</name>
    </ligand>
</feature>
<feature type="binding site" evidence="1">
    <location>
        <position position="172"/>
    </location>
    <ligand>
        <name>substrate</name>
    </ligand>
</feature>
<feature type="binding site" evidence="1">
    <location>
        <position position="172"/>
    </location>
    <ligand>
        <name>Zn(2+)</name>
        <dbReference type="ChEBI" id="CHEBI:29105"/>
    </ligand>
</feature>
<feature type="binding site" evidence="1">
    <location>
        <position position="180"/>
    </location>
    <ligand>
        <name>Zn(2+)</name>
        <dbReference type="ChEBI" id="CHEBI:29105"/>
    </ligand>
</feature>
<organism>
    <name type="scientific">Hamiltonella defensa subsp. Acyrthosiphon pisum (strain 5AT)</name>
    <dbReference type="NCBI Taxonomy" id="572265"/>
    <lineage>
        <taxon>Bacteria</taxon>
        <taxon>Pseudomonadati</taxon>
        <taxon>Pseudomonadota</taxon>
        <taxon>Gammaproteobacteria</taxon>
        <taxon>Enterobacterales</taxon>
        <taxon>Enterobacteriaceae</taxon>
        <taxon>aphid secondary symbionts</taxon>
        <taxon>Candidatus Hamiltonella</taxon>
    </lineage>
</organism>
<comment type="function">
    <text evidence="1">Catalyzes the isomerization of sedoheptulose 7-phosphate in D-glycero-D-manno-heptose 7-phosphate.</text>
</comment>
<comment type="catalytic activity">
    <reaction evidence="1">
        <text>2 D-sedoheptulose 7-phosphate = D-glycero-alpha-D-manno-heptose 7-phosphate + D-glycero-beta-D-manno-heptose 7-phosphate</text>
        <dbReference type="Rhea" id="RHEA:27489"/>
        <dbReference type="ChEBI" id="CHEBI:57483"/>
        <dbReference type="ChEBI" id="CHEBI:60203"/>
        <dbReference type="ChEBI" id="CHEBI:60204"/>
        <dbReference type="EC" id="5.3.1.28"/>
    </reaction>
</comment>
<comment type="cofactor">
    <cofactor evidence="1">
        <name>Zn(2+)</name>
        <dbReference type="ChEBI" id="CHEBI:29105"/>
    </cofactor>
    <text evidence="1">Binds 1 zinc ion per subunit.</text>
</comment>
<comment type="pathway">
    <text evidence="1">Carbohydrate biosynthesis; D-glycero-D-manno-heptose 7-phosphate biosynthesis; D-glycero-alpha-D-manno-heptose 7-phosphate and D-glycero-beta-D-manno-heptose 7-phosphate from sedoheptulose 7-phosphate: step 1/1.</text>
</comment>
<comment type="subunit">
    <text evidence="1">Homotetramer.</text>
</comment>
<comment type="subcellular location">
    <subcellularLocation>
        <location evidence="1">Cytoplasm</location>
    </subcellularLocation>
</comment>
<comment type="miscellaneous">
    <text evidence="1">The reaction produces a racemic mixture of D-glycero-alpha-D-manno-heptose 7-phosphate and D-glycero-beta-D-manno-heptose 7-phosphate.</text>
</comment>
<comment type="similarity">
    <text evidence="1">Belongs to the SIS family. GmhA subfamily.</text>
</comment>
<name>GMHA_HAMD5</name>